<organism>
    <name type="scientific">Streptococcus pyogenes serotype M3 (strain SSI-1)</name>
    <dbReference type="NCBI Taxonomy" id="193567"/>
    <lineage>
        <taxon>Bacteria</taxon>
        <taxon>Bacillati</taxon>
        <taxon>Bacillota</taxon>
        <taxon>Bacilli</taxon>
        <taxon>Lactobacillales</taxon>
        <taxon>Streptococcaceae</taxon>
        <taxon>Streptococcus</taxon>
    </lineage>
</organism>
<dbReference type="EC" id="2.7.7.6" evidence="1"/>
<dbReference type="EMBL" id="BA000034">
    <property type="protein sequence ID" value="BAC63343.1"/>
    <property type="molecule type" value="Genomic_DNA"/>
</dbReference>
<dbReference type="RefSeq" id="WP_002982907.1">
    <property type="nucleotide sequence ID" value="NC_004606.1"/>
</dbReference>
<dbReference type="SMR" id="P0DH19"/>
<dbReference type="KEGG" id="sps:SPs0248"/>
<dbReference type="HOGENOM" id="CLU_187518_0_0_9"/>
<dbReference type="GO" id="GO:0000428">
    <property type="term" value="C:DNA-directed RNA polymerase complex"/>
    <property type="evidence" value="ECO:0007669"/>
    <property type="project" value="UniProtKB-KW"/>
</dbReference>
<dbReference type="GO" id="GO:0003677">
    <property type="term" value="F:DNA binding"/>
    <property type="evidence" value="ECO:0007669"/>
    <property type="project" value="UniProtKB-UniRule"/>
</dbReference>
<dbReference type="GO" id="GO:0003899">
    <property type="term" value="F:DNA-directed RNA polymerase activity"/>
    <property type="evidence" value="ECO:0007669"/>
    <property type="project" value="UniProtKB-UniRule"/>
</dbReference>
<dbReference type="GO" id="GO:0006351">
    <property type="term" value="P:DNA-templated transcription"/>
    <property type="evidence" value="ECO:0007669"/>
    <property type="project" value="UniProtKB-UniRule"/>
</dbReference>
<dbReference type="Gene3D" id="3.10.20.730">
    <property type="entry name" value="RNAP, epsilon subunit-like"/>
    <property type="match status" value="1"/>
</dbReference>
<dbReference type="HAMAP" id="MF_01553">
    <property type="entry name" value="RNApol_bact_RpoY"/>
    <property type="match status" value="1"/>
</dbReference>
<dbReference type="InterPro" id="IPR009907">
    <property type="entry name" value="RpoY"/>
</dbReference>
<dbReference type="NCBIfam" id="NF010188">
    <property type="entry name" value="PRK13667.1"/>
    <property type="match status" value="1"/>
</dbReference>
<dbReference type="Pfam" id="PF07288">
    <property type="entry name" value="RpoY"/>
    <property type="match status" value="1"/>
</dbReference>
<protein>
    <recommendedName>
        <fullName evidence="1">DNA-directed RNA polymerase subunit epsilon</fullName>
        <shortName evidence="1">RNAP epsilon subunit</shortName>
        <ecNumber evidence="1">2.7.7.6</ecNumber>
    </recommendedName>
    <alternativeName>
        <fullName evidence="1">RNA polymerase epsilon subunit</fullName>
    </alternativeName>
    <alternativeName>
        <fullName evidence="1">Transcriptase subunit epsilon</fullName>
    </alternativeName>
</protein>
<name>RPOY_STRPQ</name>
<sequence>MIYKVFYQETKDQSPRRESTKALYLNIDATDELDGRIKARRLVEDNTYYNVEFIELLSDKHLDYEKETGVFELTEF</sequence>
<reference key="1">
    <citation type="journal article" date="2003" name="Genome Res.">
        <title>Genome sequence of an M3 strain of Streptococcus pyogenes reveals a large-scale genomic rearrangement in invasive strains and new insights into phage evolution.</title>
        <authorList>
            <person name="Nakagawa I."/>
            <person name="Kurokawa K."/>
            <person name="Yamashita A."/>
            <person name="Nakata M."/>
            <person name="Tomiyasu Y."/>
            <person name="Okahashi N."/>
            <person name="Kawabata S."/>
            <person name="Yamazaki K."/>
            <person name="Shiba T."/>
            <person name="Yasunaga T."/>
            <person name="Hayashi H."/>
            <person name="Hattori M."/>
            <person name="Hamada S."/>
        </authorList>
    </citation>
    <scope>NUCLEOTIDE SEQUENCE [LARGE SCALE GENOMIC DNA]</scope>
    <source>
        <strain>SSI-1</strain>
    </source>
</reference>
<proteinExistence type="inferred from homology"/>
<evidence type="ECO:0000255" key="1">
    <source>
        <dbReference type="HAMAP-Rule" id="MF_01553"/>
    </source>
</evidence>
<accession>P0DH19</accession>
<accession>Q79YG9</accession>
<accession>Q7CER9</accession>
<feature type="chain" id="PRO_0000411649" description="DNA-directed RNA polymerase subunit epsilon">
    <location>
        <begin position="1"/>
        <end position="76"/>
    </location>
</feature>
<gene>
    <name evidence="1" type="primary">rpoY</name>
    <name type="ordered locus">SPs0248</name>
</gene>
<keyword id="KW-0240">DNA-directed RNA polymerase</keyword>
<keyword id="KW-0548">Nucleotidyltransferase</keyword>
<keyword id="KW-0804">Transcription</keyword>
<keyword id="KW-0808">Transferase</keyword>
<comment type="function">
    <text evidence="1">A non-essential component of RNA polymerase (RNAP).</text>
</comment>
<comment type="catalytic activity">
    <reaction evidence="1">
        <text>RNA(n) + a ribonucleoside 5'-triphosphate = RNA(n+1) + diphosphate</text>
        <dbReference type="Rhea" id="RHEA:21248"/>
        <dbReference type="Rhea" id="RHEA-COMP:14527"/>
        <dbReference type="Rhea" id="RHEA-COMP:17342"/>
        <dbReference type="ChEBI" id="CHEBI:33019"/>
        <dbReference type="ChEBI" id="CHEBI:61557"/>
        <dbReference type="ChEBI" id="CHEBI:140395"/>
        <dbReference type="EC" id="2.7.7.6"/>
    </reaction>
</comment>
<comment type="subunit">
    <text evidence="1">RNAP is composed of a core of 2 alpha, a beta and a beta' subunit. The core is associated with a delta subunit, and at least one of epsilon or omega. When a sigma factor is associated with the core the holoenzyme is formed, which can initiate transcription.</text>
</comment>
<comment type="similarity">
    <text evidence="1">Belongs to the RNA polymerase subunit epsilon family.</text>
</comment>